<dbReference type="EMBL" id="AF488616">
    <property type="protein sequence ID" value="AAM10959.1"/>
    <property type="molecule type" value="mRNA"/>
</dbReference>
<dbReference type="EMBL" id="AL031032">
    <property type="protein sequence ID" value="CAA19870.1"/>
    <property type="status" value="ALT_SEQ"/>
    <property type="molecule type" value="Genomic_DNA"/>
</dbReference>
<dbReference type="EMBL" id="AL161584">
    <property type="protein sequence ID" value="CAB80105.1"/>
    <property type="status" value="ALT_SEQ"/>
    <property type="molecule type" value="Genomic_DNA"/>
</dbReference>
<dbReference type="EMBL" id="CP002687">
    <property type="protein sequence ID" value="AEE86287.1"/>
    <property type="molecule type" value="Genomic_DNA"/>
</dbReference>
<dbReference type="EMBL" id="BT003137">
    <property type="protein sequence ID" value="AAO24569.1"/>
    <property type="molecule type" value="mRNA"/>
</dbReference>
<dbReference type="EMBL" id="AK228110">
    <property type="protein sequence ID" value="BAF00068.1"/>
    <property type="molecule type" value="mRNA"/>
</dbReference>
<dbReference type="PIR" id="T05216">
    <property type="entry name" value="T05216"/>
</dbReference>
<dbReference type="RefSeq" id="NP_195114.2">
    <property type="nucleotide sequence ID" value="NM_119546.3"/>
</dbReference>
<dbReference type="SMR" id="Q84WK0"/>
<dbReference type="BioGRID" id="14813">
    <property type="interactions" value="13"/>
</dbReference>
<dbReference type="FunCoup" id="Q84WK0">
    <property type="interactions" value="130"/>
</dbReference>
<dbReference type="IntAct" id="Q84WK0">
    <property type="interactions" value="10"/>
</dbReference>
<dbReference type="STRING" id="3702.Q84WK0"/>
<dbReference type="PaxDb" id="3702-AT4G33880.1"/>
<dbReference type="EnsemblPlants" id="AT4G33880.1">
    <property type="protein sequence ID" value="AT4G33880.1"/>
    <property type="gene ID" value="AT4G33880"/>
</dbReference>
<dbReference type="GeneID" id="829531"/>
<dbReference type="Gramene" id="AT4G33880.1">
    <property type="protein sequence ID" value="AT4G33880.1"/>
    <property type="gene ID" value="AT4G33880"/>
</dbReference>
<dbReference type="KEGG" id="ath:AT4G33880"/>
<dbReference type="Araport" id="AT4G33880"/>
<dbReference type="TAIR" id="AT4G33880">
    <property type="gene designation" value="RSL2"/>
</dbReference>
<dbReference type="eggNOG" id="ENOG502R684">
    <property type="taxonomic scope" value="Eukaryota"/>
</dbReference>
<dbReference type="HOGENOM" id="CLU_066110_1_0_1"/>
<dbReference type="InParanoid" id="Q84WK0"/>
<dbReference type="OMA" id="YWNLGSH"/>
<dbReference type="OrthoDB" id="651283at2759"/>
<dbReference type="PhylomeDB" id="Q84WK0"/>
<dbReference type="PRO" id="PR:Q84WK0"/>
<dbReference type="Proteomes" id="UP000006548">
    <property type="component" value="Chromosome 4"/>
</dbReference>
<dbReference type="ExpressionAtlas" id="Q84WK0">
    <property type="expression patterns" value="baseline and differential"/>
</dbReference>
<dbReference type="GO" id="GO:0005634">
    <property type="term" value="C:nucleus"/>
    <property type="evidence" value="ECO:0007669"/>
    <property type="project" value="UniProtKB-SubCell"/>
</dbReference>
<dbReference type="GO" id="GO:0003677">
    <property type="term" value="F:DNA binding"/>
    <property type="evidence" value="ECO:0007669"/>
    <property type="project" value="UniProtKB-KW"/>
</dbReference>
<dbReference type="GO" id="GO:0003700">
    <property type="term" value="F:DNA-binding transcription factor activity"/>
    <property type="evidence" value="ECO:0000250"/>
    <property type="project" value="TAIR"/>
</dbReference>
<dbReference type="GO" id="GO:0046983">
    <property type="term" value="F:protein dimerization activity"/>
    <property type="evidence" value="ECO:0007669"/>
    <property type="project" value="InterPro"/>
</dbReference>
<dbReference type="GO" id="GO:0006355">
    <property type="term" value="P:regulation of DNA-templated transcription"/>
    <property type="evidence" value="ECO:0000304"/>
    <property type="project" value="TAIR"/>
</dbReference>
<dbReference type="GO" id="GO:0009733">
    <property type="term" value="P:response to auxin"/>
    <property type="evidence" value="ECO:0000270"/>
    <property type="project" value="TAIR"/>
</dbReference>
<dbReference type="GO" id="GO:0048766">
    <property type="term" value="P:root hair initiation"/>
    <property type="evidence" value="ECO:0000315"/>
    <property type="project" value="TAIR"/>
</dbReference>
<dbReference type="CDD" id="cd11454">
    <property type="entry name" value="bHLH_AtIND_like"/>
    <property type="match status" value="1"/>
</dbReference>
<dbReference type="FunFam" id="4.10.280.10:FF:000022">
    <property type="entry name" value="Basic helix-loop-helix transcription factor"/>
    <property type="match status" value="1"/>
</dbReference>
<dbReference type="Gene3D" id="4.10.280.10">
    <property type="entry name" value="Helix-loop-helix DNA-binding domain"/>
    <property type="match status" value="1"/>
</dbReference>
<dbReference type="InterPro" id="IPR011598">
    <property type="entry name" value="bHLH_dom"/>
</dbReference>
<dbReference type="InterPro" id="IPR036638">
    <property type="entry name" value="HLH_DNA-bd_sf"/>
</dbReference>
<dbReference type="InterPro" id="IPR045843">
    <property type="entry name" value="IND-like"/>
</dbReference>
<dbReference type="PANTHER" id="PTHR16223">
    <property type="entry name" value="TRANSCRIPTION FACTOR BHLH83-RELATED"/>
    <property type="match status" value="1"/>
</dbReference>
<dbReference type="PANTHER" id="PTHR16223:SF338">
    <property type="entry name" value="TRANSCRIPTION FACTOR RSL2"/>
    <property type="match status" value="1"/>
</dbReference>
<dbReference type="Pfam" id="PF00010">
    <property type="entry name" value="HLH"/>
    <property type="match status" value="1"/>
</dbReference>
<dbReference type="SMART" id="SM00353">
    <property type="entry name" value="HLH"/>
    <property type="match status" value="1"/>
</dbReference>
<dbReference type="SUPFAM" id="SSF47459">
    <property type="entry name" value="HLH, helix-loop-helix DNA-binding domain"/>
    <property type="match status" value="1"/>
</dbReference>
<dbReference type="PROSITE" id="PS50888">
    <property type="entry name" value="BHLH"/>
    <property type="match status" value="1"/>
</dbReference>
<gene>
    <name evidence="9" type="primary">RSL2</name>
    <name evidence="8" type="synonym">BHLH85</name>
    <name evidence="10" type="synonym">EN115</name>
    <name evidence="11" type="ordered locus">At4g33880</name>
    <name evidence="12" type="ORF">F17I5.70</name>
</gene>
<accession>Q84WK0</accession>
<accession>O81756</accession>
<accession>Q8S3D3</accession>
<evidence type="ECO:0000255" key="1">
    <source>
        <dbReference type="PROSITE-ProRule" id="PRU00981"/>
    </source>
</evidence>
<evidence type="ECO:0000256" key="2">
    <source>
        <dbReference type="SAM" id="MobiDB-lite"/>
    </source>
</evidence>
<evidence type="ECO:0000269" key="3">
    <source>
    </source>
</evidence>
<evidence type="ECO:0000269" key="4">
    <source>
    </source>
</evidence>
<evidence type="ECO:0000269" key="5">
    <source>
    </source>
</evidence>
<evidence type="ECO:0000269" key="6">
    <source>
    </source>
</evidence>
<evidence type="ECO:0000269" key="7">
    <source>
    </source>
</evidence>
<evidence type="ECO:0000303" key="8">
    <source>
    </source>
</evidence>
<evidence type="ECO:0000303" key="9">
    <source>
    </source>
</evidence>
<evidence type="ECO:0000305" key="10"/>
<evidence type="ECO:0000312" key="11">
    <source>
        <dbReference type="Araport" id="AT4G33880"/>
    </source>
</evidence>
<evidence type="ECO:0000312" key="12">
    <source>
        <dbReference type="EMBL" id="CAA19870.1"/>
    </source>
</evidence>
<reference key="1">
    <citation type="journal article" date="2003" name="Mol. Biol. Evol.">
        <title>The basic helix-loop-helix transcription factor family in plants: a genome-wide study of protein structure and functional diversity.</title>
        <authorList>
            <person name="Heim M.A."/>
            <person name="Jakoby M."/>
            <person name="Werber M."/>
            <person name="Martin C."/>
            <person name="Weisshaar B."/>
            <person name="Bailey P.C."/>
        </authorList>
    </citation>
    <scope>NUCLEOTIDE SEQUENCE [MRNA]</scope>
    <scope>TISSUE SPECIFICITY</scope>
    <scope>INDUCTION</scope>
    <scope>GENE FAMILY</scope>
    <scope>NOMENCLATURE</scope>
    <source>
        <strain>cv. Columbia</strain>
        <tissue>Root</tissue>
    </source>
</reference>
<reference key="2">
    <citation type="journal article" date="1999" name="Nature">
        <title>Sequence and analysis of chromosome 4 of the plant Arabidopsis thaliana.</title>
        <authorList>
            <person name="Mayer K.F.X."/>
            <person name="Schueller C."/>
            <person name="Wambutt R."/>
            <person name="Murphy G."/>
            <person name="Volckaert G."/>
            <person name="Pohl T."/>
            <person name="Duesterhoeft A."/>
            <person name="Stiekema W."/>
            <person name="Entian K.-D."/>
            <person name="Terryn N."/>
            <person name="Harris B."/>
            <person name="Ansorge W."/>
            <person name="Brandt P."/>
            <person name="Grivell L.A."/>
            <person name="Rieger M."/>
            <person name="Weichselgartner M."/>
            <person name="de Simone V."/>
            <person name="Obermaier B."/>
            <person name="Mache R."/>
            <person name="Mueller M."/>
            <person name="Kreis M."/>
            <person name="Delseny M."/>
            <person name="Puigdomenech P."/>
            <person name="Watson M."/>
            <person name="Schmidtheini T."/>
            <person name="Reichert B."/>
            <person name="Portetelle D."/>
            <person name="Perez-Alonso M."/>
            <person name="Boutry M."/>
            <person name="Bancroft I."/>
            <person name="Vos P."/>
            <person name="Hoheisel J."/>
            <person name="Zimmermann W."/>
            <person name="Wedler H."/>
            <person name="Ridley P."/>
            <person name="Langham S.-A."/>
            <person name="McCullagh B."/>
            <person name="Bilham L."/>
            <person name="Robben J."/>
            <person name="van der Schueren J."/>
            <person name="Grymonprez B."/>
            <person name="Chuang Y.-J."/>
            <person name="Vandenbussche F."/>
            <person name="Braeken M."/>
            <person name="Weltjens I."/>
            <person name="Voet M."/>
            <person name="Bastiaens I."/>
            <person name="Aert R."/>
            <person name="Defoor E."/>
            <person name="Weitzenegger T."/>
            <person name="Bothe G."/>
            <person name="Ramsperger U."/>
            <person name="Hilbert H."/>
            <person name="Braun M."/>
            <person name="Holzer E."/>
            <person name="Brandt A."/>
            <person name="Peters S."/>
            <person name="van Staveren M."/>
            <person name="Dirkse W."/>
            <person name="Mooijman P."/>
            <person name="Klein Lankhorst R."/>
            <person name="Rose M."/>
            <person name="Hauf J."/>
            <person name="Koetter P."/>
            <person name="Berneiser S."/>
            <person name="Hempel S."/>
            <person name="Feldpausch M."/>
            <person name="Lamberth S."/>
            <person name="Van den Daele H."/>
            <person name="De Keyser A."/>
            <person name="Buysshaert C."/>
            <person name="Gielen J."/>
            <person name="Villarroel R."/>
            <person name="De Clercq R."/>
            <person name="van Montagu M."/>
            <person name="Rogers J."/>
            <person name="Cronin A."/>
            <person name="Quail M.A."/>
            <person name="Bray-Allen S."/>
            <person name="Clark L."/>
            <person name="Doggett J."/>
            <person name="Hall S."/>
            <person name="Kay M."/>
            <person name="Lennard N."/>
            <person name="McLay K."/>
            <person name="Mayes R."/>
            <person name="Pettett A."/>
            <person name="Rajandream M.A."/>
            <person name="Lyne M."/>
            <person name="Benes V."/>
            <person name="Rechmann S."/>
            <person name="Borkova D."/>
            <person name="Bloecker H."/>
            <person name="Scharfe M."/>
            <person name="Grimm M."/>
            <person name="Loehnert T.-H."/>
            <person name="Dose S."/>
            <person name="de Haan M."/>
            <person name="Maarse A.C."/>
            <person name="Schaefer M."/>
            <person name="Mueller-Auer S."/>
            <person name="Gabel C."/>
            <person name="Fuchs M."/>
            <person name="Fartmann B."/>
            <person name="Granderath K."/>
            <person name="Dauner D."/>
            <person name="Herzl A."/>
            <person name="Neumann S."/>
            <person name="Argiriou A."/>
            <person name="Vitale D."/>
            <person name="Liguori R."/>
            <person name="Piravandi E."/>
            <person name="Massenet O."/>
            <person name="Quigley F."/>
            <person name="Clabauld G."/>
            <person name="Muendlein A."/>
            <person name="Felber R."/>
            <person name="Schnabl S."/>
            <person name="Hiller R."/>
            <person name="Schmidt W."/>
            <person name="Lecharny A."/>
            <person name="Aubourg S."/>
            <person name="Chefdor F."/>
            <person name="Cooke R."/>
            <person name="Berger C."/>
            <person name="Monfort A."/>
            <person name="Casacuberta E."/>
            <person name="Gibbons T."/>
            <person name="Weber N."/>
            <person name="Vandenbol M."/>
            <person name="Bargues M."/>
            <person name="Terol J."/>
            <person name="Torres A."/>
            <person name="Perez-Perez A."/>
            <person name="Purnelle B."/>
            <person name="Bent E."/>
            <person name="Johnson S."/>
            <person name="Tacon D."/>
            <person name="Jesse T."/>
            <person name="Heijnen L."/>
            <person name="Schwarz S."/>
            <person name="Scholler P."/>
            <person name="Heber S."/>
            <person name="Francs P."/>
            <person name="Bielke C."/>
            <person name="Frishman D."/>
            <person name="Haase D."/>
            <person name="Lemcke K."/>
            <person name="Mewes H.-W."/>
            <person name="Stocker S."/>
            <person name="Zaccaria P."/>
            <person name="Bevan M."/>
            <person name="Wilson R.K."/>
            <person name="de la Bastide M."/>
            <person name="Habermann K."/>
            <person name="Parnell L."/>
            <person name="Dedhia N."/>
            <person name="Gnoj L."/>
            <person name="Schutz K."/>
            <person name="Huang E."/>
            <person name="Spiegel L."/>
            <person name="Sekhon M."/>
            <person name="Murray J."/>
            <person name="Sheet P."/>
            <person name="Cordes M."/>
            <person name="Abu-Threideh J."/>
            <person name="Stoneking T."/>
            <person name="Kalicki J."/>
            <person name="Graves T."/>
            <person name="Harmon G."/>
            <person name="Edwards J."/>
            <person name="Latreille P."/>
            <person name="Courtney L."/>
            <person name="Cloud J."/>
            <person name="Abbott A."/>
            <person name="Scott K."/>
            <person name="Johnson D."/>
            <person name="Minx P."/>
            <person name="Bentley D."/>
            <person name="Fulton B."/>
            <person name="Miller N."/>
            <person name="Greco T."/>
            <person name="Kemp K."/>
            <person name="Kramer J."/>
            <person name="Fulton L."/>
            <person name="Mardis E."/>
            <person name="Dante M."/>
            <person name="Pepin K."/>
            <person name="Hillier L.W."/>
            <person name="Nelson J."/>
            <person name="Spieth J."/>
            <person name="Ryan E."/>
            <person name="Andrews S."/>
            <person name="Geisel C."/>
            <person name="Layman D."/>
            <person name="Du H."/>
            <person name="Ali J."/>
            <person name="Berghoff A."/>
            <person name="Jones K."/>
            <person name="Drone K."/>
            <person name="Cotton M."/>
            <person name="Joshu C."/>
            <person name="Antonoiu B."/>
            <person name="Zidanic M."/>
            <person name="Strong C."/>
            <person name="Sun H."/>
            <person name="Lamar B."/>
            <person name="Yordan C."/>
            <person name="Ma P."/>
            <person name="Zhong J."/>
            <person name="Preston R."/>
            <person name="Vil D."/>
            <person name="Shekher M."/>
            <person name="Matero A."/>
            <person name="Shah R."/>
            <person name="Swaby I.K."/>
            <person name="O'Shaughnessy A."/>
            <person name="Rodriguez M."/>
            <person name="Hoffman J."/>
            <person name="Till S."/>
            <person name="Granat S."/>
            <person name="Shohdy N."/>
            <person name="Hasegawa A."/>
            <person name="Hameed A."/>
            <person name="Lodhi M."/>
            <person name="Johnson A."/>
            <person name="Chen E."/>
            <person name="Marra M.A."/>
            <person name="Martienssen R."/>
            <person name="McCombie W.R."/>
        </authorList>
    </citation>
    <scope>NUCLEOTIDE SEQUENCE [LARGE SCALE GENOMIC DNA]</scope>
    <source>
        <strain>cv. Columbia</strain>
    </source>
</reference>
<reference key="3">
    <citation type="journal article" date="2017" name="Plant J.">
        <title>Araport11: a complete reannotation of the Arabidopsis thaliana reference genome.</title>
        <authorList>
            <person name="Cheng C.Y."/>
            <person name="Krishnakumar V."/>
            <person name="Chan A.P."/>
            <person name="Thibaud-Nissen F."/>
            <person name="Schobel S."/>
            <person name="Town C.D."/>
        </authorList>
    </citation>
    <scope>GENOME REANNOTATION</scope>
    <source>
        <strain>cv. Columbia</strain>
    </source>
</reference>
<reference key="4">
    <citation type="journal article" date="2003" name="Science">
        <title>Empirical analysis of transcriptional activity in the Arabidopsis genome.</title>
        <authorList>
            <person name="Yamada K."/>
            <person name="Lim J."/>
            <person name="Dale J.M."/>
            <person name="Chen H."/>
            <person name="Shinn P."/>
            <person name="Palm C.J."/>
            <person name="Southwick A.M."/>
            <person name="Wu H.C."/>
            <person name="Kim C.J."/>
            <person name="Nguyen M."/>
            <person name="Pham P.K."/>
            <person name="Cheuk R.F."/>
            <person name="Karlin-Newmann G."/>
            <person name="Liu S.X."/>
            <person name="Lam B."/>
            <person name="Sakano H."/>
            <person name="Wu T."/>
            <person name="Yu G."/>
            <person name="Miranda M."/>
            <person name="Quach H.L."/>
            <person name="Tripp M."/>
            <person name="Chang C.H."/>
            <person name="Lee J.M."/>
            <person name="Toriumi M.J."/>
            <person name="Chan M.M."/>
            <person name="Tang C.C."/>
            <person name="Onodera C.S."/>
            <person name="Deng J.M."/>
            <person name="Akiyama K."/>
            <person name="Ansari Y."/>
            <person name="Arakawa T."/>
            <person name="Banh J."/>
            <person name="Banno F."/>
            <person name="Bowser L."/>
            <person name="Brooks S.Y."/>
            <person name="Carninci P."/>
            <person name="Chao Q."/>
            <person name="Choy N."/>
            <person name="Enju A."/>
            <person name="Goldsmith A.D."/>
            <person name="Gurjal M."/>
            <person name="Hansen N.F."/>
            <person name="Hayashizaki Y."/>
            <person name="Johnson-Hopson C."/>
            <person name="Hsuan V.W."/>
            <person name="Iida K."/>
            <person name="Karnes M."/>
            <person name="Khan S."/>
            <person name="Koesema E."/>
            <person name="Ishida J."/>
            <person name="Jiang P.X."/>
            <person name="Jones T."/>
            <person name="Kawai J."/>
            <person name="Kamiya A."/>
            <person name="Meyers C."/>
            <person name="Nakajima M."/>
            <person name="Narusaka M."/>
            <person name="Seki M."/>
            <person name="Sakurai T."/>
            <person name="Satou M."/>
            <person name="Tamse R."/>
            <person name="Vaysberg M."/>
            <person name="Wallender E.K."/>
            <person name="Wong C."/>
            <person name="Yamamura Y."/>
            <person name="Yuan S."/>
            <person name="Shinozaki K."/>
            <person name="Davis R.W."/>
            <person name="Theologis A."/>
            <person name="Ecker J.R."/>
        </authorList>
    </citation>
    <scope>NUCLEOTIDE SEQUENCE [LARGE SCALE MRNA]</scope>
    <source>
        <strain>cv. Columbia</strain>
    </source>
</reference>
<reference key="5">
    <citation type="submission" date="2006-07" db="EMBL/GenBank/DDBJ databases">
        <title>Large-scale analysis of RIKEN Arabidopsis full-length (RAFL) cDNAs.</title>
        <authorList>
            <person name="Totoki Y."/>
            <person name="Seki M."/>
            <person name="Ishida J."/>
            <person name="Nakajima M."/>
            <person name="Enju A."/>
            <person name="Kamiya A."/>
            <person name="Narusaka M."/>
            <person name="Shin-i T."/>
            <person name="Nakagawa M."/>
            <person name="Sakamoto N."/>
            <person name="Oishi K."/>
            <person name="Kohara Y."/>
            <person name="Kobayashi M."/>
            <person name="Toyoda A."/>
            <person name="Sakaki Y."/>
            <person name="Sakurai T."/>
            <person name="Iida K."/>
            <person name="Akiyama K."/>
            <person name="Satou M."/>
            <person name="Toyoda T."/>
            <person name="Konagaya A."/>
            <person name="Carninci P."/>
            <person name="Kawai J."/>
            <person name="Hayashizaki Y."/>
            <person name="Shinozaki K."/>
        </authorList>
    </citation>
    <scope>NUCLEOTIDE SEQUENCE [LARGE SCALE MRNA]</scope>
    <source>
        <strain>cv. Columbia</strain>
    </source>
</reference>
<reference key="6">
    <citation type="journal article" date="2003" name="Plant Cell">
        <title>The Arabidopsis basic/helix-loop-helix transcription factor family.</title>
        <authorList>
            <person name="Toledo-Ortiz G."/>
            <person name="Huq E."/>
            <person name="Quail P.H."/>
        </authorList>
    </citation>
    <scope>GENE FAMILY</scope>
</reference>
<reference key="7">
    <citation type="journal article" date="2003" name="Plant Cell">
        <title>Update on the basic helix-loop-helix transcription factor gene family in Arabidopsis thaliana.</title>
        <authorList>
            <person name="Bailey P.C."/>
            <person name="Martin C."/>
            <person name="Toledo-Ortiz G."/>
            <person name="Quail P.H."/>
            <person name="Huq E."/>
            <person name="Heim M.A."/>
            <person name="Jakoby M."/>
            <person name="Werber M."/>
            <person name="Weisshaar B."/>
        </authorList>
    </citation>
    <scope>GENE FAMILY</scope>
    <scope>NOMENCLATURE</scope>
</reference>
<reference key="8">
    <citation type="journal article" date="2010" name="Nat. Genet.">
        <title>A basic helix-loop-helix transcription factor controls cell growth and size in root hairs.</title>
        <authorList>
            <person name="Yi K."/>
            <person name="Menand B."/>
            <person name="Bell E."/>
            <person name="Dolan L."/>
        </authorList>
    </citation>
    <scope>FUNCTION</scope>
    <scope>SUBCELLULAR LOCATION</scope>
    <scope>TISSUE SPECIFICITY</scope>
    <scope>DISRUPTION PHENOTYPE</scope>
</reference>
<reference key="9">
    <citation type="journal article" date="2016" name="New Phytol.">
        <title>ROOT HAIR DEFECTIVE SIX-LIKE4 (RSL4) promotes root hair elongation by transcriptionally regulating the expression of genes required for cell growth.</title>
        <authorList>
            <person name="Vijayakumar P."/>
            <person name="Datta S."/>
            <person name="Dolan L."/>
        </authorList>
    </citation>
    <scope>FUNCTION</scope>
</reference>
<reference key="10">
    <citation type="journal article" date="2018" name="Nat. Commun.">
        <title>A mechanistic framework for auxin dependent Arabidopsis root hair elongation to low external phosphate.</title>
        <authorList>
            <person name="Bhosale R."/>
            <person name="Giri J."/>
            <person name="Pandey B.K."/>
            <person name="Giehl R.F.H."/>
            <person name="Hartmann A."/>
            <person name="Traini R."/>
            <person name="Truskina J."/>
            <person name="Leftley N."/>
            <person name="Hanlon M."/>
            <person name="Swarup K."/>
            <person name="Rashed A."/>
            <person name="Voss U."/>
            <person name="Alonso J."/>
            <person name="Stepanova A."/>
            <person name="Yun J."/>
            <person name="Ljung K."/>
            <person name="Brown K.M."/>
            <person name="Lynch J.P."/>
            <person name="Dolan L."/>
            <person name="Vernoux T."/>
            <person name="Bishopp A."/>
            <person name="Wells D."/>
            <person name="von Wiren N."/>
            <person name="Bennett M.J."/>
            <person name="Swarup R."/>
        </authorList>
    </citation>
    <scope>FUNCTION</scope>
    <scope>INDUCTION BY LOW PHOSPHATE</scope>
</reference>
<reference key="11">
    <citation type="journal article" date="2020" name="Plant Cell">
        <title>Arabidopsis JAZ proteins interact with and suppress RHD6 transcription factor to regulate jasmonate-stimulated root hair development.</title>
        <authorList>
            <person name="Han X."/>
            <person name="Zhang M."/>
            <person name="Yang M."/>
            <person name="Hu Y."/>
        </authorList>
    </citation>
    <scope>INDUCTION BY JASMONATE</scope>
</reference>
<name>RSL2_ARATH</name>
<keyword id="KW-0238">DNA-binding</keyword>
<keyword id="KW-0539">Nucleus</keyword>
<keyword id="KW-1185">Reference proteome</keyword>
<keyword id="KW-0804">Transcription</keyword>
<keyword id="KW-0805">Transcription regulation</keyword>
<feature type="chain" id="PRO_0000358777" description="Transcription factor RSL2">
    <location>
        <begin position="1"/>
        <end position="352"/>
    </location>
</feature>
<feature type="domain" description="bHLH" evidence="1">
    <location>
        <begin position="272"/>
        <end position="321"/>
    </location>
</feature>
<feature type="region of interest" description="Disordered" evidence="2">
    <location>
        <begin position="160"/>
        <end position="277"/>
    </location>
</feature>
<feature type="region of interest" description="Basic motif" evidence="1">
    <location>
        <begin position="272"/>
        <end position="285"/>
    </location>
</feature>
<feature type="region of interest" description="Helix-loop-helix motif" evidence="1">
    <location>
        <begin position="286"/>
        <end position="321"/>
    </location>
</feature>
<feature type="compositionally biased region" description="Polar residues" evidence="2">
    <location>
        <begin position="160"/>
        <end position="169"/>
    </location>
</feature>
<feature type="compositionally biased region" description="Basic residues" evidence="2">
    <location>
        <begin position="183"/>
        <end position="192"/>
    </location>
</feature>
<feature type="compositionally biased region" description="Polar residues" evidence="2">
    <location>
        <begin position="223"/>
        <end position="232"/>
    </location>
</feature>
<feature type="sequence conflict" description="In Ref. 1; AAM10959." evidence="10" ref="1">
    <original>A</original>
    <variation>T</variation>
    <location>
        <position position="44"/>
    </location>
</feature>
<proteinExistence type="evidence at transcript level"/>
<protein>
    <recommendedName>
        <fullName evidence="10">Transcription factor RSL2</fullName>
    </recommendedName>
    <alternativeName>
        <fullName evidence="8">Basic helix-loop-helix protein 85</fullName>
        <shortName evidence="8">AtbHLH85</shortName>
        <shortName evidence="8">bHLH 85</shortName>
    </alternativeName>
    <alternativeName>
        <fullName evidence="9">Protein ROOT HAIR DEFECTIVE 6-LIKE 2</fullName>
        <shortName evidence="9">Protein RHD SIX-LIKE 2</shortName>
    </alternativeName>
    <alternativeName>
        <fullName evidence="10">Transcription factor EN 115</fullName>
    </alternativeName>
    <alternativeName>
        <fullName evidence="10">Transcription factor bHLH85</fullName>
    </alternativeName>
    <alternativeName>
        <fullName evidence="8">bHLH transcription factor bHLH085</fullName>
    </alternativeName>
</protein>
<organism>
    <name type="scientific">Arabidopsis thaliana</name>
    <name type="common">Mouse-ear cress</name>
    <dbReference type="NCBI Taxonomy" id="3702"/>
    <lineage>
        <taxon>Eukaryota</taxon>
        <taxon>Viridiplantae</taxon>
        <taxon>Streptophyta</taxon>
        <taxon>Embryophyta</taxon>
        <taxon>Tracheophyta</taxon>
        <taxon>Spermatophyta</taxon>
        <taxon>Magnoliopsida</taxon>
        <taxon>eudicotyledons</taxon>
        <taxon>Gunneridae</taxon>
        <taxon>Pentapetalae</taxon>
        <taxon>rosids</taxon>
        <taxon>malvids</taxon>
        <taxon>Brassicales</taxon>
        <taxon>Brassicaceae</taxon>
        <taxon>Camelineae</taxon>
        <taxon>Arabidopsis</taxon>
    </lineage>
</organism>
<comment type="function">
    <text evidence="4 5 6">Transcription factor involved in the regulation of root hair elongation (PubMed:20139979, PubMed:27452638). Does not seem to be a direct transcriptional target of RHD6 and RSL1 (PubMed:20139979). Involved in the regulation of root hair elongation in response to low phosphate (PubMed:29651114).</text>
</comment>
<comment type="subunit">
    <text evidence="10">Homodimer.</text>
</comment>
<comment type="subcellular location">
    <subcellularLocation>
        <location evidence="1 4">Nucleus</location>
    </subcellularLocation>
</comment>
<comment type="tissue specificity">
    <text evidence="3 4">Expressed in roots (PubMed:12679534). Expressed in root epidermal hair cells (PubMed:20139979).</text>
</comment>
<comment type="induction">
    <text evidence="3 6 7">Induced by jasmonate (JA) treatment (PubMed:12679534, PubMed:31988260). Induced by low phosphate conditions (PubMed:29651114).</text>
</comment>
<comment type="disruption phenotype">
    <text evidence="4">Reduced length of root hairs.</text>
</comment>
<comment type="sequence caution" evidence="10">
    <conflict type="erroneous gene model prediction">
        <sequence resource="EMBL-CDS" id="CAA19870"/>
    </conflict>
</comment>
<comment type="sequence caution" evidence="10">
    <conflict type="erroneous gene model prediction">
        <sequence resource="EMBL-CDS" id="CAB80105"/>
    </conflict>
</comment>
<sequence>MEAMGEWSNNLGGMYTYATEEADFMNQLLASYDHPGTGSSSGAAASGDHQGLYWNLGSHHNHLSLVSEAGSFCFSQESSSYSAGNSGYYTVVPPTVEENQNETMDFGMEDVTINTNSYLVGEETSECDVEKYSSGKTLMPLETVVENHDDEESLLQSEISVTTTKSLTGSKKRSRATSTDKNKRARVNKRAQKNVEMSGDNNEGEEEEGETKLKKRKNGAMMSRQNSSTTFCTEEESNCADQDGGGEDSSSKEDDPSKALNLNGKTRASRGAATDPQSLYARKRRERINERLRILQNLVPNGTKVDISTMLEEAVHYVKFLQLQIKLLSSDDLWMYAPIAFNGMDIGLSSPR</sequence>